<comment type="function">
    <text evidence="1">Involved in DNA repair and in homologous recombination. May regulate the cleavage reactions of the branch-structured DNA. Has a very weak ATPase activity that is not stimulated by DNA. Binds DNA but does not promote DNA strands exchange (By similarity).</text>
</comment>
<comment type="similarity">
    <text evidence="3">Belongs to the eukaryotic RecA-like protein family. RadB subfamily.</text>
</comment>
<accession>Q57702</accession>
<dbReference type="EMBL" id="L77117">
    <property type="protein sequence ID" value="AAB98241.1"/>
    <property type="molecule type" value="Genomic_DNA"/>
</dbReference>
<dbReference type="PIR" id="G64331">
    <property type="entry name" value="G64331"/>
</dbReference>
<dbReference type="RefSeq" id="WP_010869752.1">
    <property type="nucleotide sequence ID" value="NC_000909.1"/>
</dbReference>
<dbReference type="SMR" id="Q57702"/>
<dbReference type="STRING" id="243232.MJ_0254"/>
<dbReference type="PaxDb" id="243232-MJ_0254"/>
<dbReference type="EnsemblBacteria" id="AAB98241">
    <property type="protein sequence ID" value="AAB98241"/>
    <property type="gene ID" value="MJ_0254"/>
</dbReference>
<dbReference type="GeneID" id="1451108"/>
<dbReference type="KEGG" id="mja:MJ_0254"/>
<dbReference type="eggNOG" id="arCOG00417">
    <property type="taxonomic scope" value="Archaea"/>
</dbReference>
<dbReference type="HOGENOM" id="CLU_041732_2_0_2"/>
<dbReference type="InParanoid" id="Q57702"/>
<dbReference type="OrthoDB" id="17644at2157"/>
<dbReference type="PhylomeDB" id="Q57702"/>
<dbReference type="Proteomes" id="UP000000805">
    <property type="component" value="Chromosome"/>
</dbReference>
<dbReference type="GO" id="GO:0005524">
    <property type="term" value="F:ATP binding"/>
    <property type="evidence" value="ECO:0007669"/>
    <property type="project" value="UniProtKB-UniRule"/>
</dbReference>
<dbReference type="GO" id="GO:0016887">
    <property type="term" value="F:ATP hydrolysis activity"/>
    <property type="evidence" value="ECO:0007669"/>
    <property type="project" value="InterPro"/>
</dbReference>
<dbReference type="GO" id="GO:0140664">
    <property type="term" value="F:ATP-dependent DNA damage sensor activity"/>
    <property type="evidence" value="ECO:0007669"/>
    <property type="project" value="InterPro"/>
</dbReference>
<dbReference type="GO" id="GO:0003684">
    <property type="term" value="F:damaged DNA binding"/>
    <property type="evidence" value="ECO:0007669"/>
    <property type="project" value="UniProtKB-UniRule"/>
</dbReference>
<dbReference type="GO" id="GO:0006310">
    <property type="term" value="P:DNA recombination"/>
    <property type="evidence" value="ECO:0007669"/>
    <property type="project" value="UniProtKB-UniRule"/>
</dbReference>
<dbReference type="GO" id="GO:0006281">
    <property type="term" value="P:DNA repair"/>
    <property type="evidence" value="ECO:0007669"/>
    <property type="project" value="UniProtKB-UniRule"/>
</dbReference>
<dbReference type="Gene3D" id="3.40.50.300">
    <property type="entry name" value="P-loop containing nucleotide triphosphate hydrolases"/>
    <property type="match status" value="1"/>
</dbReference>
<dbReference type="HAMAP" id="MF_00350">
    <property type="entry name" value="RadB"/>
    <property type="match status" value="1"/>
</dbReference>
<dbReference type="InterPro" id="IPR003593">
    <property type="entry name" value="AAA+_ATPase"/>
</dbReference>
<dbReference type="InterPro" id="IPR013632">
    <property type="entry name" value="DNA_recomb/repair_Rad51_C"/>
</dbReference>
<dbReference type="InterPro" id="IPR011939">
    <property type="entry name" value="DNA_repair_and_recomb_RadB"/>
</dbReference>
<dbReference type="InterPro" id="IPR027417">
    <property type="entry name" value="P-loop_NTPase"/>
</dbReference>
<dbReference type="InterPro" id="IPR020588">
    <property type="entry name" value="RecA_ATP-bd"/>
</dbReference>
<dbReference type="NCBIfam" id="TIGR02237">
    <property type="entry name" value="recomb_radB"/>
    <property type="match status" value="1"/>
</dbReference>
<dbReference type="PANTHER" id="PTHR22942:SF47">
    <property type="entry name" value="DNA REPAIR AND RECOMBINATION PROTEIN RADB"/>
    <property type="match status" value="1"/>
</dbReference>
<dbReference type="PANTHER" id="PTHR22942">
    <property type="entry name" value="RECA/RAD51/RADA DNA STRAND-PAIRING FAMILY MEMBER"/>
    <property type="match status" value="1"/>
</dbReference>
<dbReference type="Pfam" id="PF08423">
    <property type="entry name" value="Rad51"/>
    <property type="match status" value="1"/>
</dbReference>
<dbReference type="PIRSF" id="PIRSF003336">
    <property type="entry name" value="RadB"/>
    <property type="match status" value="1"/>
</dbReference>
<dbReference type="SMART" id="SM00382">
    <property type="entry name" value="AAA"/>
    <property type="match status" value="1"/>
</dbReference>
<dbReference type="SUPFAM" id="SSF52540">
    <property type="entry name" value="P-loop containing nucleoside triphosphate hydrolases"/>
    <property type="match status" value="1"/>
</dbReference>
<dbReference type="PROSITE" id="PS50162">
    <property type="entry name" value="RECA_2"/>
    <property type="match status" value="1"/>
</dbReference>
<reference key="1">
    <citation type="journal article" date="1996" name="Science">
        <title>Complete genome sequence of the methanogenic archaeon, Methanococcus jannaschii.</title>
        <authorList>
            <person name="Bult C.J."/>
            <person name="White O."/>
            <person name="Olsen G.J."/>
            <person name="Zhou L."/>
            <person name="Fleischmann R.D."/>
            <person name="Sutton G.G."/>
            <person name="Blake J.A."/>
            <person name="FitzGerald L.M."/>
            <person name="Clayton R.A."/>
            <person name="Gocayne J.D."/>
            <person name="Kerlavage A.R."/>
            <person name="Dougherty B.A."/>
            <person name="Tomb J.-F."/>
            <person name="Adams M.D."/>
            <person name="Reich C.I."/>
            <person name="Overbeek R."/>
            <person name="Kirkness E.F."/>
            <person name="Weinstock K.G."/>
            <person name="Merrick J.M."/>
            <person name="Glodek A."/>
            <person name="Scott J.L."/>
            <person name="Geoghagen N.S.M."/>
            <person name="Weidman J.F."/>
            <person name="Fuhrmann J.L."/>
            <person name="Nguyen D."/>
            <person name="Utterback T.R."/>
            <person name="Kelley J.M."/>
            <person name="Peterson J.D."/>
            <person name="Sadow P.W."/>
            <person name="Hanna M.C."/>
            <person name="Cotton M.D."/>
            <person name="Roberts K.M."/>
            <person name="Hurst M.A."/>
            <person name="Kaine B.P."/>
            <person name="Borodovsky M."/>
            <person name="Klenk H.-P."/>
            <person name="Fraser C.M."/>
            <person name="Smith H.O."/>
            <person name="Woese C.R."/>
            <person name="Venter J.C."/>
        </authorList>
    </citation>
    <scope>NUCLEOTIDE SEQUENCE [LARGE SCALE GENOMIC DNA]</scope>
    <source>
        <strain>ATCC 43067 / DSM 2661 / JAL-1 / JCM 10045 / NBRC 100440</strain>
    </source>
</reference>
<proteinExistence type="inferred from homology"/>
<feature type="chain" id="PRO_0000150113" description="DNA repair and recombination protein RadB">
    <location>
        <begin position="1"/>
        <end position="212"/>
    </location>
</feature>
<feature type="binding site" evidence="2">
    <location>
        <begin position="20"/>
        <end position="27"/>
    </location>
    <ligand>
        <name>ATP</name>
        <dbReference type="ChEBI" id="CHEBI:30616"/>
    </ligand>
</feature>
<keyword id="KW-0067">ATP-binding</keyword>
<keyword id="KW-0227">DNA damage</keyword>
<keyword id="KW-0233">DNA recombination</keyword>
<keyword id="KW-0238">DNA-binding</keyword>
<keyword id="KW-0547">Nucleotide-binding</keyword>
<keyword id="KW-1185">Reference proteome</keyword>
<name>RADB_METJA</name>
<organism>
    <name type="scientific">Methanocaldococcus jannaschii (strain ATCC 43067 / DSM 2661 / JAL-1 / JCM 10045 / NBRC 100440)</name>
    <name type="common">Methanococcus jannaschii</name>
    <dbReference type="NCBI Taxonomy" id="243232"/>
    <lineage>
        <taxon>Archaea</taxon>
        <taxon>Methanobacteriati</taxon>
        <taxon>Methanobacteriota</taxon>
        <taxon>Methanomada group</taxon>
        <taxon>Methanococci</taxon>
        <taxon>Methanococcales</taxon>
        <taxon>Methanocaldococcaceae</taxon>
        <taxon>Methanocaldococcus</taxon>
    </lineage>
</organism>
<protein>
    <recommendedName>
        <fullName>DNA repair and recombination protein RadB</fullName>
    </recommendedName>
</protein>
<sequence>MLKEILLGNAEKGIITQIYGPPGVGKTNICIINSINAVNSGKVIYIDTEGGLSIERIKQIASNNYKIVLENMIIYNAFDFYEQDKIIQKELPLITNNASLIVVDNITSLYRLELSDEANKNIMLNKMLGNQVKTLLKLAKTNNLAVIITNQVRETVNGFEASGGRLLEYWSKCIVRLEKLNGDRLAILEKHLHAGEERVKFRIVERGIEIID</sequence>
<evidence type="ECO:0000250" key="1"/>
<evidence type="ECO:0000255" key="2"/>
<evidence type="ECO:0000305" key="3"/>
<gene>
    <name type="primary">radB</name>
    <name type="ordered locus">MJ0254</name>
</gene>